<organism>
    <name type="scientific">Pyrobaculum aerophilum (strain ATCC 51768 / DSM 7523 / JCM 9630 / CIP 104966 / NBRC 100827 / IM2)</name>
    <dbReference type="NCBI Taxonomy" id="178306"/>
    <lineage>
        <taxon>Archaea</taxon>
        <taxon>Thermoproteota</taxon>
        <taxon>Thermoprotei</taxon>
        <taxon>Thermoproteales</taxon>
        <taxon>Thermoproteaceae</taxon>
        <taxon>Pyrobaculum</taxon>
    </lineage>
</organism>
<dbReference type="EMBL" id="AE009441">
    <property type="protein sequence ID" value="AAL63778.1"/>
    <property type="molecule type" value="Genomic_DNA"/>
</dbReference>
<dbReference type="RefSeq" id="WP_011008249.1">
    <property type="nucleotide sequence ID" value="NC_003364.1"/>
</dbReference>
<dbReference type="SMR" id="Q8ZWC4"/>
<dbReference type="STRING" id="178306.PAE1861"/>
<dbReference type="EnsemblBacteria" id="AAL63778">
    <property type="protein sequence ID" value="AAL63778"/>
    <property type="gene ID" value="PAE1861"/>
</dbReference>
<dbReference type="GeneID" id="1466034"/>
<dbReference type="KEGG" id="pai:PAE1861"/>
<dbReference type="PATRIC" id="fig|178306.9.peg.1374"/>
<dbReference type="eggNOG" id="arCOG04004">
    <property type="taxonomic scope" value="Archaea"/>
</dbReference>
<dbReference type="HOGENOM" id="CLU_000134_18_0_2"/>
<dbReference type="InParanoid" id="Q8ZWC4"/>
<dbReference type="Proteomes" id="UP000002439">
    <property type="component" value="Chromosome"/>
</dbReference>
<dbReference type="Gene3D" id="1.25.40.20">
    <property type="entry name" value="Ankyrin repeat-containing domain"/>
    <property type="match status" value="3"/>
</dbReference>
<dbReference type="InterPro" id="IPR051637">
    <property type="entry name" value="Ank_repeat_dom-contain_49"/>
</dbReference>
<dbReference type="InterPro" id="IPR002110">
    <property type="entry name" value="Ankyrin_rpt"/>
</dbReference>
<dbReference type="InterPro" id="IPR036770">
    <property type="entry name" value="Ankyrin_rpt-contain_sf"/>
</dbReference>
<dbReference type="PANTHER" id="PTHR24180">
    <property type="entry name" value="CYCLIN-DEPENDENT KINASE INHIBITOR 2C-RELATED"/>
    <property type="match status" value="1"/>
</dbReference>
<dbReference type="PANTHER" id="PTHR24180:SF45">
    <property type="entry name" value="POLY [ADP-RIBOSE] POLYMERASE TANKYRASE"/>
    <property type="match status" value="1"/>
</dbReference>
<dbReference type="Pfam" id="PF00023">
    <property type="entry name" value="Ank"/>
    <property type="match status" value="1"/>
</dbReference>
<dbReference type="Pfam" id="PF12796">
    <property type="entry name" value="Ank_2"/>
    <property type="match status" value="2"/>
</dbReference>
<dbReference type="PRINTS" id="PR01415">
    <property type="entry name" value="ANKYRIN"/>
</dbReference>
<dbReference type="SMART" id="SM00248">
    <property type="entry name" value="ANK"/>
    <property type="match status" value="7"/>
</dbReference>
<dbReference type="SUPFAM" id="SSF48403">
    <property type="entry name" value="Ankyrin repeat"/>
    <property type="match status" value="1"/>
</dbReference>
<dbReference type="PROSITE" id="PS50297">
    <property type="entry name" value="ANK_REP_REGION"/>
    <property type="match status" value="1"/>
</dbReference>
<dbReference type="PROSITE" id="PS50088">
    <property type="entry name" value="ANK_REPEAT"/>
    <property type="match status" value="3"/>
</dbReference>
<reference key="1">
    <citation type="journal article" date="2002" name="Proc. Natl. Acad. Sci. U.S.A.">
        <title>Genome sequence of the hyperthermophilic crenarchaeon Pyrobaculum aerophilum.</title>
        <authorList>
            <person name="Fitz-Gibbon S.T."/>
            <person name="Ladner H."/>
            <person name="Kim U.-J."/>
            <person name="Stetter K.O."/>
            <person name="Simon M.I."/>
            <person name="Miller J.H."/>
        </authorList>
    </citation>
    <scope>NUCLEOTIDE SEQUENCE [LARGE SCALE GENOMIC DNA]</scope>
    <source>
        <strain>ATCC 51768 / DSM 7523 / JCM 9630 / CIP 104966 / NBRC 100827 / IM2</strain>
    </source>
</reference>
<sequence>MDCNNLLNAARRGEAELLTRLLNEGCSPDVQDDYGRTPLYYAAERGDVGTVDLLIKAGADPNARDREGKTPIIIATQSRKFGVIPLLSASAVGVEEALYTAARNGCHKAVRYMLARGVRPGASHGESLLHLVAGDAGLVKLLLEYGVDPNARDAHGKTPLHMASEHNCAQCVELLLKRGPDVNVKDGAGRTPLHYADDVDCIKLLLRYGADLNAVDNMGRTPLHYAEDGLAAEALLKRGARPVPDKYGELPTIPTC</sequence>
<accession>Q8ZWC4</accession>
<name>Y1861_PYRAE</name>
<proteinExistence type="predicted"/>
<protein>
    <recommendedName>
        <fullName>Putative ankyrin repeat protein PAE1861</fullName>
    </recommendedName>
</protein>
<keyword id="KW-0040">ANK repeat</keyword>
<keyword id="KW-1185">Reference proteome</keyword>
<keyword id="KW-0677">Repeat</keyword>
<gene>
    <name type="ordered locus">PAE1861</name>
</gene>
<feature type="chain" id="PRO_0000067232" description="Putative ankyrin repeat protein PAE1861">
    <location>
        <begin position="1"/>
        <end position="256"/>
    </location>
</feature>
<feature type="repeat" description="ANK 1">
    <location>
        <begin position="1"/>
        <end position="30"/>
    </location>
</feature>
<feature type="repeat" description="ANK 2">
    <location>
        <begin position="34"/>
        <end position="63"/>
    </location>
</feature>
<feature type="repeat" description="ANK 3">
    <location>
        <begin position="67"/>
        <end position="92"/>
    </location>
</feature>
<feature type="repeat" description="ANK 4">
    <location>
        <begin position="93"/>
        <end position="122"/>
    </location>
</feature>
<feature type="repeat" description="ANK 5">
    <location>
        <begin position="124"/>
        <end position="151"/>
    </location>
</feature>
<feature type="repeat" description="ANK 6">
    <location>
        <begin position="155"/>
        <end position="184"/>
    </location>
</feature>
<feature type="repeat" description="ANK 7">
    <location>
        <begin position="188"/>
        <end position="214"/>
    </location>
</feature>
<feature type="repeat" description="ANK 8">
    <location>
        <begin position="218"/>
        <end position="245"/>
    </location>
</feature>